<reference key="1">
    <citation type="submission" date="2007-10" db="EMBL/GenBank/DDBJ databases">
        <title>Brucella canis ATCC 23365 whole genome shotgun sequencing project.</title>
        <authorList>
            <person name="Setubal J.C."/>
            <person name="Bowns C."/>
            <person name="Boyle S."/>
            <person name="Crasta O.R."/>
            <person name="Czar M.J."/>
            <person name="Dharmanolla C."/>
            <person name="Gillespie J.J."/>
            <person name="Kenyon R.W."/>
            <person name="Lu J."/>
            <person name="Mane S."/>
            <person name="Mohapatra S."/>
            <person name="Nagrani S."/>
            <person name="Purkayastha A."/>
            <person name="Rajasimha H.K."/>
            <person name="Shallom J.M."/>
            <person name="Shallom S."/>
            <person name="Shukla M."/>
            <person name="Snyder E.E."/>
            <person name="Sobral B.W."/>
            <person name="Wattam A.R."/>
            <person name="Will R."/>
            <person name="Williams K."/>
            <person name="Yoo H."/>
            <person name="Bruce D."/>
            <person name="Detter C."/>
            <person name="Munk C."/>
            <person name="Brettin T.S."/>
        </authorList>
    </citation>
    <scope>NUCLEOTIDE SEQUENCE [LARGE SCALE GENOMIC DNA]</scope>
    <source>
        <strain>ATCC 23365 / NCTC 10854 / RM-666</strain>
    </source>
</reference>
<name>RL28_BRUC2</name>
<organism>
    <name type="scientific">Brucella canis (strain ATCC 23365 / NCTC 10854 / RM-666)</name>
    <dbReference type="NCBI Taxonomy" id="483179"/>
    <lineage>
        <taxon>Bacteria</taxon>
        <taxon>Pseudomonadati</taxon>
        <taxon>Pseudomonadota</taxon>
        <taxon>Alphaproteobacteria</taxon>
        <taxon>Hyphomicrobiales</taxon>
        <taxon>Brucellaceae</taxon>
        <taxon>Brucella/Ochrobactrum group</taxon>
        <taxon>Brucella</taxon>
    </lineage>
</organism>
<comment type="similarity">
    <text evidence="1">Belongs to the bacterial ribosomal protein bL28 family.</text>
</comment>
<protein>
    <recommendedName>
        <fullName evidence="1">Large ribosomal subunit protein bL28</fullName>
    </recommendedName>
    <alternativeName>
        <fullName evidence="2">50S ribosomal protein L28</fullName>
    </alternativeName>
</protein>
<feature type="chain" id="PRO_1000079839" description="Large ribosomal subunit protein bL28">
    <location>
        <begin position="1"/>
        <end position="97"/>
    </location>
</feature>
<keyword id="KW-1185">Reference proteome</keyword>
<keyword id="KW-0687">Ribonucleoprotein</keyword>
<keyword id="KW-0689">Ribosomal protein</keyword>
<evidence type="ECO:0000255" key="1">
    <source>
        <dbReference type="HAMAP-Rule" id="MF_00373"/>
    </source>
</evidence>
<evidence type="ECO:0000305" key="2"/>
<proteinExistence type="inferred from homology"/>
<accession>A9M9A0</accession>
<dbReference type="EMBL" id="CP000872">
    <property type="protein sequence ID" value="ABX63047.1"/>
    <property type="molecule type" value="Genomic_DNA"/>
</dbReference>
<dbReference type="RefSeq" id="WP_002965079.1">
    <property type="nucleotide sequence ID" value="NC_010103.1"/>
</dbReference>
<dbReference type="SMR" id="A9M9A0"/>
<dbReference type="GeneID" id="97534716"/>
<dbReference type="KEGG" id="bcs:BCAN_A2061"/>
<dbReference type="HOGENOM" id="CLU_064548_4_2_5"/>
<dbReference type="Proteomes" id="UP000001385">
    <property type="component" value="Chromosome I"/>
</dbReference>
<dbReference type="GO" id="GO:0022625">
    <property type="term" value="C:cytosolic large ribosomal subunit"/>
    <property type="evidence" value="ECO:0007669"/>
    <property type="project" value="TreeGrafter"/>
</dbReference>
<dbReference type="GO" id="GO:0003735">
    <property type="term" value="F:structural constituent of ribosome"/>
    <property type="evidence" value="ECO:0007669"/>
    <property type="project" value="InterPro"/>
</dbReference>
<dbReference type="GO" id="GO:0006412">
    <property type="term" value="P:translation"/>
    <property type="evidence" value="ECO:0007669"/>
    <property type="project" value="UniProtKB-UniRule"/>
</dbReference>
<dbReference type="Gene3D" id="2.30.170.40">
    <property type="entry name" value="Ribosomal protein L28/L24"/>
    <property type="match status" value="1"/>
</dbReference>
<dbReference type="HAMAP" id="MF_00373">
    <property type="entry name" value="Ribosomal_bL28"/>
    <property type="match status" value="1"/>
</dbReference>
<dbReference type="InterPro" id="IPR026569">
    <property type="entry name" value="Ribosomal_bL28"/>
</dbReference>
<dbReference type="InterPro" id="IPR034704">
    <property type="entry name" value="Ribosomal_bL28/bL31-like_sf"/>
</dbReference>
<dbReference type="InterPro" id="IPR001383">
    <property type="entry name" value="Ribosomal_bL28_bact-type"/>
</dbReference>
<dbReference type="InterPro" id="IPR037147">
    <property type="entry name" value="Ribosomal_bL28_sf"/>
</dbReference>
<dbReference type="NCBIfam" id="TIGR00009">
    <property type="entry name" value="L28"/>
    <property type="match status" value="1"/>
</dbReference>
<dbReference type="PANTHER" id="PTHR13528">
    <property type="entry name" value="39S RIBOSOMAL PROTEIN L28, MITOCHONDRIAL"/>
    <property type="match status" value="1"/>
</dbReference>
<dbReference type="PANTHER" id="PTHR13528:SF2">
    <property type="entry name" value="LARGE RIBOSOMAL SUBUNIT PROTEIN BL28M"/>
    <property type="match status" value="1"/>
</dbReference>
<dbReference type="Pfam" id="PF00830">
    <property type="entry name" value="Ribosomal_L28"/>
    <property type="match status" value="1"/>
</dbReference>
<dbReference type="SUPFAM" id="SSF143800">
    <property type="entry name" value="L28p-like"/>
    <property type="match status" value="1"/>
</dbReference>
<sequence>MSRACELTGKSVQYGNNVSHANNRTRRRFLPNLCNVTLISETLGQSYRLRISANALRSVEHRGGLDAFLVKSDDKELSQRARLLKRQIAKKQAEAAA</sequence>
<gene>
    <name evidence="1" type="primary">rpmB</name>
    <name type="ordered locus">BCAN_A2061</name>
</gene>